<sequence>MAVSDLSHRFEGESVGRALELVGERWTLLILREAFFGVRRFGQLARNLGIPRPTLSSRLRMLVEVGLFDRVPYSSDPERHEYRLTEAGRDLFAAIVVLMQWGDEYLPRPEGPPIKLRHHTCGEHADPRLICTHCGEEITARNVTPEPGPGFKAKLASS</sequence>
<protein>
    <recommendedName>
        <fullName>Uncharacterized HTH-type transcriptional regulator Mb3122</fullName>
    </recommendedName>
</protein>
<evidence type="ECO:0000255" key="1">
    <source>
        <dbReference type="PROSITE-ProRule" id="PRU00435"/>
    </source>
</evidence>
<accession>P0A649</accession>
<accession>A0A1R3Y392</accession>
<accession>O05774</accession>
<accession>X2BNC8</accession>
<organism>
    <name type="scientific">Mycobacterium bovis (strain ATCC BAA-935 / AF2122/97)</name>
    <dbReference type="NCBI Taxonomy" id="233413"/>
    <lineage>
        <taxon>Bacteria</taxon>
        <taxon>Bacillati</taxon>
        <taxon>Actinomycetota</taxon>
        <taxon>Actinomycetes</taxon>
        <taxon>Mycobacteriales</taxon>
        <taxon>Mycobacteriaceae</taxon>
        <taxon>Mycobacterium</taxon>
        <taxon>Mycobacterium tuberculosis complex</taxon>
    </lineage>
</organism>
<proteinExistence type="predicted"/>
<reference key="1">
    <citation type="journal article" date="2003" name="Proc. Natl. Acad. Sci. U.S.A.">
        <title>The complete genome sequence of Mycobacterium bovis.</title>
        <authorList>
            <person name="Garnier T."/>
            <person name="Eiglmeier K."/>
            <person name="Camus J.-C."/>
            <person name="Medina N."/>
            <person name="Mansoor H."/>
            <person name="Pryor M."/>
            <person name="Duthoy S."/>
            <person name="Grondin S."/>
            <person name="Lacroix C."/>
            <person name="Monsempe C."/>
            <person name="Simon S."/>
            <person name="Harris B."/>
            <person name="Atkin R."/>
            <person name="Doggett J."/>
            <person name="Mayes R."/>
            <person name="Keating L."/>
            <person name="Wheeler P.R."/>
            <person name="Parkhill J."/>
            <person name="Barrell B.G."/>
            <person name="Cole S.T."/>
            <person name="Gordon S.V."/>
            <person name="Hewinson R.G."/>
        </authorList>
    </citation>
    <scope>NUCLEOTIDE SEQUENCE [LARGE SCALE GENOMIC DNA]</scope>
    <source>
        <strain>ATCC BAA-935 / AF2122/97</strain>
    </source>
</reference>
<reference key="2">
    <citation type="journal article" date="2017" name="Genome Announc.">
        <title>Updated reference genome sequence and annotation of Mycobacterium bovis AF2122/97.</title>
        <authorList>
            <person name="Malone K.M."/>
            <person name="Farrell D."/>
            <person name="Stuber T.P."/>
            <person name="Schubert O.T."/>
            <person name="Aebersold R."/>
            <person name="Robbe-Austerman S."/>
            <person name="Gordon S.V."/>
        </authorList>
    </citation>
    <scope>NUCLEOTIDE SEQUENCE [LARGE SCALE GENOMIC DNA]</scope>
    <scope>GENOME REANNOTATION</scope>
    <source>
        <strain>ATCC BAA-935 / AF2122/97</strain>
    </source>
</reference>
<feature type="chain" id="PRO_0000148891" description="Uncharacterized HTH-type transcriptional regulator Mb3122">
    <location>
        <begin position="1"/>
        <end position="158"/>
    </location>
</feature>
<feature type="domain" description="HTH hxlR-type" evidence="1">
    <location>
        <begin position="13"/>
        <end position="110"/>
    </location>
</feature>
<name>Y3122_MYCBO</name>
<dbReference type="EMBL" id="LT708304">
    <property type="protein sequence ID" value="SIU01747.1"/>
    <property type="molecule type" value="Genomic_DNA"/>
</dbReference>
<dbReference type="RefSeq" id="NP_856767.1">
    <property type="nucleotide sequence ID" value="NC_002945.3"/>
</dbReference>
<dbReference type="RefSeq" id="WP_003416099.1">
    <property type="nucleotide sequence ID" value="NC_002945.4"/>
</dbReference>
<dbReference type="SMR" id="P0A649"/>
<dbReference type="KEGG" id="mbo:BQ2027_MB3122"/>
<dbReference type="PATRIC" id="fig|233413.5.peg.3431"/>
<dbReference type="Proteomes" id="UP000001419">
    <property type="component" value="Chromosome"/>
</dbReference>
<dbReference type="GO" id="GO:0003677">
    <property type="term" value="F:DNA binding"/>
    <property type="evidence" value="ECO:0007669"/>
    <property type="project" value="UniProtKB-KW"/>
</dbReference>
<dbReference type="CDD" id="cd00090">
    <property type="entry name" value="HTH_ARSR"/>
    <property type="match status" value="1"/>
</dbReference>
<dbReference type="Gene3D" id="1.10.10.10">
    <property type="entry name" value="Winged helix-like DNA-binding domain superfamily/Winged helix DNA-binding domain"/>
    <property type="match status" value="1"/>
</dbReference>
<dbReference type="InterPro" id="IPR011991">
    <property type="entry name" value="ArsR-like_HTH"/>
</dbReference>
<dbReference type="InterPro" id="IPR002577">
    <property type="entry name" value="HTH_HxlR"/>
</dbReference>
<dbReference type="InterPro" id="IPR036388">
    <property type="entry name" value="WH-like_DNA-bd_sf"/>
</dbReference>
<dbReference type="InterPro" id="IPR036390">
    <property type="entry name" value="WH_DNA-bd_sf"/>
</dbReference>
<dbReference type="PANTHER" id="PTHR33204">
    <property type="entry name" value="TRANSCRIPTIONAL REGULATOR, MARR FAMILY"/>
    <property type="match status" value="1"/>
</dbReference>
<dbReference type="PANTHER" id="PTHR33204:SF18">
    <property type="entry name" value="TRANSCRIPTIONAL REGULATORY PROTEIN"/>
    <property type="match status" value="1"/>
</dbReference>
<dbReference type="Pfam" id="PF01638">
    <property type="entry name" value="HxlR"/>
    <property type="match status" value="1"/>
</dbReference>
<dbReference type="SUPFAM" id="SSF46785">
    <property type="entry name" value="Winged helix' DNA-binding domain"/>
    <property type="match status" value="1"/>
</dbReference>
<dbReference type="PROSITE" id="PS51118">
    <property type="entry name" value="HTH_HXLR"/>
    <property type="match status" value="1"/>
</dbReference>
<gene>
    <name type="ordered locus">BQ2027_MB3122</name>
</gene>
<keyword id="KW-0238">DNA-binding</keyword>
<keyword id="KW-1185">Reference proteome</keyword>
<keyword id="KW-0804">Transcription</keyword>
<keyword id="KW-0805">Transcription regulation</keyword>